<gene>
    <name evidence="2" type="primary">Cisd2</name>
    <name type="ORF">GK22673</name>
</gene>
<reference key="1">
    <citation type="journal article" date="2007" name="Nature">
        <title>Evolution of genes and genomes on the Drosophila phylogeny.</title>
        <authorList>
            <consortium name="Drosophila 12 genomes consortium"/>
        </authorList>
    </citation>
    <scope>NUCLEOTIDE SEQUENCE [LARGE SCALE GENOMIC DNA]</scope>
    <source>
        <strain>Tucson 14030-0811.24</strain>
    </source>
</reference>
<protein>
    <recommendedName>
        <fullName>CDGSH iron-sulfur domain-containing protein 2 homolog</fullName>
    </recommendedName>
</protein>
<proteinExistence type="inferred from homology"/>
<name>CISD2_DROWI</name>
<comment type="cofactor">
    <cofactor evidence="1">
        <name>[2Fe-2S] cluster</name>
        <dbReference type="ChEBI" id="CHEBI:190135"/>
    </cofactor>
    <text evidence="1">Binds 1 [2Fe-2S] cluster.</text>
</comment>
<comment type="subcellular location">
    <subcellularLocation>
        <location evidence="4">Endoplasmic reticulum membrane</location>
        <topology evidence="4">Single-pass membrane protein</topology>
    </subcellularLocation>
</comment>
<comment type="similarity">
    <text evidence="4">Belongs to the CISD protein family. CISD2 subfamily.</text>
</comment>
<dbReference type="EMBL" id="CH964251">
    <property type="protein sequence ID" value="EDW83101.1"/>
    <property type="molecule type" value="Genomic_DNA"/>
</dbReference>
<dbReference type="SMR" id="B4NFN4"/>
<dbReference type="STRING" id="7260.B4NFN4"/>
<dbReference type="EnsemblMetazoa" id="FBtr0253324">
    <property type="protein sequence ID" value="FBpp0251816"/>
    <property type="gene ID" value="FBgn0224650"/>
</dbReference>
<dbReference type="EnsemblMetazoa" id="XM_002072079.3">
    <property type="protein sequence ID" value="XP_002072115.1"/>
    <property type="gene ID" value="LOC6649793"/>
</dbReference>
<dbReference type="GeneID" id="6649793"/>
<dbReference type="KEGG" id="dwi:6649793"/>
<dbReference type="CTD" id="493856"/>
<dbReference type="eggNOG" id="KOG3461">
    <property type="taxonomic scope" value="Eukaryota"/>
</dbReference>
<dbReference type="HOGENOM" id="CLU_132293_1_0_1"/>
<dbReference type="OMA" id="QIRKHEP"/>
<dbReference type="OrthoDB" id="449252at2759"/>
<dbReference type="PhylomeDB" id="B4NFN4"/>
<dbReference type="Proteomes" id="UP000007798">
    <property type="component" value="Unassembled WGS sequence"/>
</dbReference>
<dbReference type="GO" id="GO:0005789">
    <property type="term" value="C:endoplasmic reticulum membrane"/>
    <property type="evidence" value="ECO:0007669"/>
    <property type="project" value="UniProtKB-SubCell"/>
</dbReference>
<dbReference type="GO" id="GO:0005741">
    <property type="term" value="C:mitochondrial outer membrane"/>
    <property type="evidence" value="ECO:0007669"/>
    <property type="project" value="TreeGrafter"/>
</dbReference>
<dbReference type="GO" id="GO:0051537">
    <property type="term" value="F:2 iron, 2 sulfur cluster binding"/>
    <property type="evidence" value="ECO:0007669"/>
    <property type="project" value="UniProtKB-KW"/>
</dbReference>
<dbReference type="GO" id="GO:0046872">
    <property type="term" value="F:metal ion binding"/>
    <property type="evidence" value="ECO:0007669"/>
    <property type="project" value="UniProtKB-KW"/>
</dbReference>
<dbReference type="GO" id="GO:0010506">
    <property type="term" value="P:regulation of autophagy"/>
    <property type="evidence" value="ECO:0007669"/>
    <property type="project" value="InterPro"/>
</dbReference>
<dbReference type="Gene3D" id="3.40.5.90">
    <property type="entry name" value="CDGSH iron-sulfur domain, mitoNEET-type"/>
    <property type="match status" value="1"/>
</dbReference>
<dbReference type="InterPro" id="IPR045131">
    <property type="entry name" value="CISD1/2"/>
</dbReference>
<dbReference type="InterPro" id="IPR018967">
    <property type="entry name" value="FeS-contain_CDGSH-typ"/>
</dbReference>
<dbReference type="InterPro" id="IPR019610">
    <property type="entry name" value="FeS-contain_mitoNEET_N"/>
</dbReference>
<dbReference type="InterPro" id="IPR042216">
    <property type="entry name" value="MitoNEET_CISD"/>
</dbReference>
<dbReference type="PANTHER" id="PTHR13680">
    <property type="entry name" value="CDGSH IRON-SULFUR DOMAIN-CONTAINING PROTEIN 1"/>
    <property type="match status" value="1"/>
</dbReference>
<dbReference type="PANTHER" id="PTHR13680:SF5">
    <property type="entry name" value="CDGSH IRON-SULFUR DOMAIN-CONTAINING PROTEIN 1"/>
    <property type="match status" value="1"/>
</dbReference>
<dbReference type="Pfam" id="PF10660">
    <property type="entry name" value="MitoNEET_N"/>
    <property type="match status" value="1"/>
</dbReference>
<dbReference type="Pfam" id="PF09360">
    <property type="entry name" value="zf-CDGSH"/>
    <property type="match status" value="1"/>
</dbReference>
<dbReference type="SMART" id="SM00704">
    <property type="entry name" value="ZnF_CDGSH"/>
    <property type="match status" value="1"/>
</dbReference>
<keyword id="KW-0001">2Fe-2S</keyword>
<keyword id="KW-0256">Endoplasmic reticulum</keyword>
<keyword id="KW-0408">Iron</keyword>
<keyword id="KW-0411">Iron-sulfur</keyword>
<keyword id="KW-0472">Membrane</keyword>
<keyword id="KW-0479">Metal-binding</keyword>
<keyword id="KW-1185">Reference proteome</keyword>
<keyword id="KW-0812">Transmembrane</keyword>
<keyword id="KW-1133">Transmembrane helix</keyword>
<organism>
    <name type="scientific">Drosophila willistoni</name>
    <name type="common">Fruit fly</name>
    <dbReference type="NCBI Taxonomy" id="7260"/>
    <lineage>
        <taxon>Eukaryota</taxon>
        <taxon>Metazoa</taxon>
        <taxon>Ecdysozoa</taxon>
        <taxon>Arthropoda</taxon>
        <taxon>Hexapoda</taxon>
        <taxon>Insecta</taxon>
        <taxon>Pterygota</taxon>
        <taxon>Neoptera</taxon>
        <taxon>Endopterygota</taxon>
        <taxon>Diptera</taxon>
        <taxon>Brachycera</taxon>
        <taxon>Muscomorpha</taxon>
        <taxon>Ephydroidea</taxon>
        <taxon>Drosophilidae</taxon>
        <taxon>Drosophila</taxon>
        <taxon>Sophophora</taxon>
    </lineage>
</organism>
<accession>B4NFN4</accession>
<sequence length="134" mass="14822">MESLSHLVKSTLPNYLSNLPVPDTLGGWFKLSFKDWLALIPPTVVVAGIGYTGYLAFCPAAQDRCSAKKNSGRCNNLIRKHEAKVVDMIDVEDIAEKAAFCRCWKTKNWPYCDGSHGEHNKQTGDNVGPVVVKK</sequence>
<feature type="chain" id="PRO_0000392031" description="CDGSH iron-sulfur domain-containing protein 2 homolog">
    <location>
        <begin position="1"/>
        <end position="134"/>
    </location>
</feature>
<feature type="topological domain" description="Lumenal" evidence="3">
    <location>
        <begin position="1"/>
        <end position="35"/>
    </location>
</feature>
<feature type="transmembrane region" description="Helical" evidence="3">
    <location>
        <begin position="36"/>
        <end position="58"/>
    </location>
</feature>
<feature type="topological domain" description="Cytoplasmic" evidence="3">
    <location>
        <begin position="59"/>
        <end position="134"/>
    </location>
</feature>
<feature type="binding site" evidence="1">
    <location>
        <position position="101"/>
    </location>
    <ligand>
        <name>[2Fe-2S] cluster</name>
        <dbReference type="ChEBI" id="CHEBI:190135"/>
    </ligand>
</feature>
<feature type="binding site" evidence="1">
    <location>
        <position position="103"/>
    </location>
    <ligand>
        <name>[2Fe-2S] cluster</name>
        <dbReference type="ChEBI" id="CHEBI:190135"/>
    </ligand>
</feature>
<feature type="binding site" evidence="1">
    <location>
        <position position="112"/>
    </location>
    <ligand>
        <name>[2Fe-2S] cluster</name>
        <dbReference type="ChEBI" id="CHEBI:190135"/>
    </ligand>
</feature>
<feature type="binding site" evidence="1">
    <location>
        <position position="116"/>
    </location>
    <ligand>
        <name>[2Fe-2S] cluster</name>
        <dbReference type="ChEBI" id="CHEBI:190135"/>
    </ligand>
</feature>
<evidence type="ECO:0000250" key="1"/>
<evidence type="ECO:0000250" key="2">
    <source>
        <dbReference type="UniProtKB" id="Q9VAM6"/>
    </source>
</evidence>
<evidence type="ECO:0000255" key="3"/>
<evidence type="ECO:0000305" key="4"/>